<proteinExistence type="evidence at protein level"/>
<dbReference type="PIR" id="A30541">
    <property type="entry name" value="A30541"/>
</dbReference>
<dbReference type="GO" id="GO:0009289">
    <property type="term" value="C:pilus"/>
    <property type="evidence" value="ECO:0007669"/>
    <property type="project" value="UniProtKB-SubCell"/>
</dbReference>
<comment type="function">
    <text>Fimbriae (also called pili), polar filaments radiating from the surface of the bacterium to a length of 0.5-1.5 micrometers and numbering 100-300 per cell, enable bacteria to colonize the epithelium of specific host organs.</text>
</comment>
<comment type="subcellular location">
    <subcellularLocation>
        <location>Fimbrium</location>
    </subcellularLocation>
</comment>
<comment type="miscellaneous">
    <text>This is an alpha-galactosyl-1,4-beta-galactosyl-specific adhesin.</text>
</comment>
<feature type="chain" id="PRO_0000196348" description="F7-1 fimbrial protein">
    <location>
        <begin position="1"/>
        <end position="18" status="greater than"/>
    </location>
</feature>
<feature type="non-terminal residue">
    <location>
        <position position="18"/>
    </location>
</feature>
<organism>
    <name type="scientific">Escherichia coli</name>
    <dbReference type="NCBI Taxonomy" id="562"/>
    <lineage>
        <taxon>Bacteria</taxon>
        <taxon>Pseudomonadati</taxon>
        <taxon>Pseudomonadota</taxon>
        <taxon>Gammaproteobacteria</taxon>
        <taxon>Enterobacterales</taxon>
        <taxon>Enterobacteriaceae</taxon>
        <taxon>Escherichia</taxon>
    </lineage>
</organism>
<name>FMF1_ECOLX</name>
<protein>
    <recommendedName>
        <fullName>F7-1 fimbrial protein</fullName>
    </recommendedName>
    <alternativeName>
        <fullName>F7-1 pilin</fullName>
    </alternativeName>
    <alternativeName>
        <fullName>P adhesin</fullName>
    </alternativeName>
</protein>
<accession>P20860</accession>
<reference key="1">
    <citation type="journal article" date="1989" name="Infect. Immun.">
        <title>Isolation and characterization of the alpha-galactosyl-1,4-beta-galactosyl-specific adhesin (P adhesin) from fimbriated Escherichia coli.</title>
        <authorList>
            <person name="Hoschuetzky H."/>
            <person name="Lottspeich F."/>
            <person name="Jann K."/>
        </authorList>
    </citation>
    <scope>PROTEIN SEQUENCE</scope>
</reference>
<keyword id="KW-0903">Direct protein sequencing</keyword>
<keyword id="KW-0281">Fimbrium</keyword>
<sequence>XNNIVFYSLGNVNSYQGG</sequence>